<feature type="chain" id="PRO_0000262913" description="Tumor necrosis factor, membrane form">
    <location>
        <begin position="1"/>
        <end position="232"/>
    </location>
</feature>
<feature type="chain" id="PRO_0000417191" description="Intracellular domain 1" evidence="1">
    <location>
        <begin position="1"/>
        <end position="38"/>
    </location>
</feature>
<feature type="chain" id="PRO_0000417192" description="Intracellular domain 2" evidence="1">
    <location>
        <begin position="1"/>
        <end position="34"/>
    </location>
</feature>
<feature type="chain" id="PRO_0000417193" description="C-domain 1" evidence="1">
    <location>
        <begin position="49"/>
        <end status="unknown"/>
    </location>
</feature>
<feature type="chain" id="PRO_0000417194" description="C-domain 2" evidence="1">
    <location>
        <begin position="51"/>
        <end status="unknown"/>
    </location>
</feature>
<feature type="chain" id="PRO_0000262914" description="Tumor necrosis factor, soluble form">
    <location>
        <begin position="75"/>
        <end position="232"/>
    </location>
</feature>
<feature type="topological domain" description="Cytoplasmic" evidence="4">
    <location>
        <begin position="1"/>
        <end position="34"/>
    </location>
</feature>
<feature type="transmembrane region" description="Helical; Signal-anchor for type II membrane protein" evidence="4">
    <location>
        <begin position="35"/>
        <end position="55"/>
    </location>
</feature>
<feature type="topological domain" description="Extracellular" evidence="4">
    <location>
        <begin position="56"/>
        <end position="232"/>
    </location>
</feature>
<feature type="domain" description="THD" evidence="5">
    <location>
        <begin position="87"/>
        <end position="232"/>
    </location>
</feature>
<feature type="site" description="Cleavage; by SPPL2A or SPPL2B" evidence="1">
    <location>
        <begin position="33"/>
        <end position="34"/>
    </location>
</feature>
<feature type="site" description="Cleavage; by SPPL2A or SPPL2B" evidence="1">
    <location>
        <begin position="38"/>
        <end position="39"/>
    </location>
</feature>
<feature type="site" description="Cleavage; by SPPL2A or SPPL2B" evidence="1">
    <location>
        <begin position="48"/>
        <end position="49"/>
    </location>
</feature>
<feature type="site" description="Cleavage; by SPPL2A or SPPL2B" evidence="1">
    <location>
        <begin position="50"/>
        <end position="51"/>
    </location>
</feature>
<feature type="site" description="Cleavage; by ADAM17" evidence="1">
    <location>
        <begin position="75"/>
        <end position="76"/>
    </location>
</feature>
<feature type="modified residue" description="Phosphoserine; by CK1" evidence="1">
    <location>
        <position position="2"/>
    </location>
</feature>
<feature type="lipid moiety-binding region" description="N6-myristoyl lysine" evidence="2">
    <location>
        <position position="19"/>
    </location>
</feature>
<feature type="glycosylation site" description="O-linked (GalNAc...) serine; in soluble form" evidence="1">
    <location>
        <position position="79"/>
    </location>
</feature>
<feature type="disulfide bond" evidence="5">
    <location>
        <begin position="144"/>
        <end position="176"/>
    </location>
</feature>
<keyword id="KW-1003">Cell membrane</keyword>
<keyword id="KW-0202">Cytokine</keyword>
<keyword id="KW-1015">Disulfide bond</keyword>
<keyword id="KW-0325">Glycoprotein</keyword>
<keyword id="KW-0449">Lipoprotein</keyword>
<keyword id="KW-0472">Membrane</keyword>
<keyword id="KW-0519">Myristate</keyword>
<keyword id="KW-0597">Phosphoprotein</keyword>
<keyword id="KW-1185">Reference proteome</keyword>
<keyword id="KW-0964">Secreted</keyword>
<keyword id="KW-0735">Signal-anchor</keyword>
<keyword id="KW-0812">Transmembrane</keyword>
<keyword id="KW-1133">Transmembrane helix</keyword>
<accession>Q19LH4</accession>
<organism>
    <name type="scientific">Callithrix jacchus</name>
    <name type="common">White-tufted-ear marmoset</name>
    <dbReference type="NCBI Taxonomy" id="9483"/>
    <lineage>
        <taxon>Eukaryota</taxon>
        <taxon>Metazoa</taxon>
        <taxon>Chordata</taxon>
        <taxon>Craniata</taxon>
        <taxon>Vertebrata</taxon>
        <taxon>Euteleostomi</taxon>
        <taxon>Mammalia</taxon>
        <taxon>Eutheria</taxon>
        <taxon>Euarchontoglires</taxon>
        <taxon>Primates</taxon>
        <taxon>Haplorrhini</taxon>
        <taxon>Platyrrhini</taxon>
        <taxon>Cebidae</taxon>
        <taxon>Callitrichinae</taxon>
        <taxon>Callithrix</taxon>
        <taxon>Callithrix</taxon>
    </lineage>
</organism>
<reference key="1">
    <citation type="submission" date="2006-04" db="EMBL/GenBank/DDBJ databases">
        <title>Common marmoset TNF alpha protein.</title>
        <authorList>
            <person name="Kohu K."/>
            <person name="Yamabe E."/>
            <person name="Suemizu H."/>
            <person name="Sasaki E."/>
            <person name="Tanioka Y."/>
            <person name="Yagita H."/>
            <person name="Habu S."/>
            <person name="Satake M."/>
        </authorList>
    </citation>
    <scope>NUCLEOTIDE SEQUENCE [MRNA]</scope>
</reference>
<comment type="function">
    <text evidence="2 3">Cytokine that binds to TNFRSF1A/TNFR1 and TNFRSF1B/TNFBR. It is mainly secreted by macrophages and can induce cell death of certain tumor cell lines. It is potent pyrogen causing fever by direct action or by stimulation of interleukin-1 secretion and is implicated in the induction of cachexia, Under certain conditions it can stimulate cell proliferation and induce cell differentiation (By similarity). Induces insulin resistance in adipocytes via inhibition of insulin-induced IRS1 tyrosine phosphorylation and insulin-induced glucose uptake. Induces GKAP42 protein degradation in adipocytes which is partially responsible for TNF-induced insulin resistance (By similarity). Plays a role in angiogenesis by inducing VEGF production synergistically with IL1B and IL6 (By similarity). Promotes osteoclastogenesis and therefore mediates bone resorption (By similarity).</text>
</comment>
<comment type="function">
    <text evidence="2">The TNF intracellular domain (ICD) form induces IL12 production in dendritic cells.</text>
</comment>
<comment type="subunit">
    <text evidence="1">Homotrimer. Interacts with SPPL2B (By similarity).</text>
</comment>
<comment type="subcellular location">
    <subcellularLocation>
        <location evidence="1">Cell membrane</location>
        <topology evidence="1">Single-pass type II membrane protein</topology>
    </subcellularLocation>
</comment>
<comment type="subcellular location">
    <molecule>Tumor necrosis factor, membrane form</molecule>
    <subcellularLocation>
        <location evidence="1">Membrane</location>
        <topology evidence="1">Single-pass type II membrane protein</topology>
    </subcellularLocation>
</comment>
<comment type="subcellular location">
    <molecule>Tumor necrosis factor, soluble form</molecule>
    <subcellularLocation>
        <location evidence="1">Secreted</location>
    </subcellularLocation>
</comment>
<comment type="subcellular location">
    <molecule>C-domain 1</molecule>
    <subcellularLocation>
        <location evidence="1">Secreted</location>
    </subcellularLocation>
</comment>
<comment type="subcellular location">
    <molecule>C-domain 2</molecule>
    <subcellularLocation>
        <location evidence="1">Secreted</location>
    </subcellularLocation>
</comment>
<comment type="PTM">
    <text evidence="1">The soluble form derives from the membrane form by proteolytic processing. The membrane-bound form is further proteolytically processed by SPPL2A or SPPL2B through regulated intramembrane proteolysis producing TNF intracellular domains (ICD1 and ICD2) released in the cytosol and TNF C-domain 1 and C-domain 2 secreted into the extracellular space (By similarity).</text>
</comment>
<comment type="PTM">
    <text evidence="1">The membrane form, but not the soluble form, is phosphorylated on serine residues. Dephosphorylation of the membrane form occurs by binding to soluble TNFRSF1A/TNFR1 (By similarity).</text>
</comment>
<comment type="PTM">
    <text evidence="1">O-glycosylated; glycans contain galactose, N-acetylgalactosamine and N-acetylneuraminic acid.</text>
</comment>
<comment type="PTM">
    <molecule>Tumor necrosis factor, soluble form</molecule>
    <text evidence="2">The soluble form is demyristoylated by SIRT6, promoting its secretion.</text>
</comment>
<comment type="similarity">
    <text evidence="6">Belongs to the tumor necrosis factor family.</text>
</comment>
<evidence type="ECO:0000250" key="1"/>
<evidence type="ECO:0000250" key="2">
    <source>
        <dbReference type="UniProtKB" id="P01375"/>
    </source>
</evidence>
<evidence type="ECO:0000250" key="3">
    <source>
        <dbReference type="UniProtKB" id="P06804"/>
    </source>
</evidence>
<evidence type="ECO:0000255" key="4"/>
<evidence type="ECO:0000255" key="5">
    <source>
        <dbReference type="PROSITE-ProRule" id="PRU01387"/>
    </source>
</evidence>
<evidence type="ECO:0000305" key="6"/>
<protein>
    <recommendedName>
        <fullName>Tumor necrosis factor</fullName>
    </recommendedName>
    <alternativeName>
        <fullName>Cachectin</fullName>
    </alternativeName>
    <alternativeName>
        <fullName>TNF-alpha</fullName>
    </alternativeName>
    <alternativeName>
        <fullName>Tumor necrosis factor ligand superfamily member 2</fullName>
        <shortName>TNF-a</shortName>
    </alternativeName>
    <component>
        <recommendedName>
            <fullName>Tumor necrosis factor, membrane form</fullName>
        </recommendedName>
        <alternativeName>
            <fullName>N-terminal fragment</fullName>
            <shortName>NTF</shortName>
        </alternativeName>
    </component>
    <component>
        <recommendedName>
            <fullName>Intracellular domain 1</fullName>
            <shortName>ICD1</shortName>
        </recommendedName>
    </component>
    <component>
        <recommendedName>
            <fullName>Intracellular domain 2</fullName>
            <shortName>ICD2</shortName>
        </recommendedName>
    </component>
    <component>
        <recommendedName>
            <fullName>C-domain 1</fullName>
        </recommendedName>
    </component>
    <component>
        <recommendedName>
            <fullName>C-domain 2</fullName>
        </recommendedName>
    </component>
    <component>
        <recommendedName>
            <fullName>Tumor necrosis factor, soluble form</fullName>
        </recommendedName>
    </component>
</protein>
<proteinExistence type="evidence at transcript level"/>
<dbReference type="EMBL" id="DQ520835">
    <property type="protein sequence ID" value="ABF67511.1"/>
    <property type="molecule type" value="mRNA"/>
</dbReference>
<dbReference type="RefSeq" id="NP_001244190.1">
    <property type="nucleotide sequence ID" value="NM_001257261.1"/>
</dbReference>
<dbReference type="SMR" id="Q19LH4"/>
<dbReference type="FunCoup" id="Q19LH4">
    <property type="interactions" value="1549"/>
</dbReference>
<dbReference type="STRING" id="9483.ENSCJAP00000053053"/>
<dbReference type="GlyCosmos" id="Q19LH4">
    <property type="glycosylation" value="1 site, No reported glycans"/>
</dbReference>
<dbReference type="GeneID" id="100397484"/>
<dbReference type="KEGG" id="cjc:100397484"/>
<dbReference type="CTD" id="7124"/>
<dbReference type="eggNOG" id="ENOG502S4K8">
    <property type="taxonomic scope" value="Eukaryota"/>
</dbReference>
<dbReference type="HOGENOM" id="CLU_070352_3_1_1"/>
<dbReference type="InParanoid" id="Q19LH4"/>
<dbReference type="OrthoDB" id="9940698at2759"/>
<dbReference type="TreeFam" id="TF332169"/>
<dbReference type="Proteomes" id="UP000008225">
    <property type="component" value="Chromosome 4"/>
</dbReference>
<dbReference type="Bgee" id="ENSCJAG00000040100">
    <property type="expression patterns" value="Expressed in kidney"/>
</dbReference>
<dbReference type="GO" id="GO:0009986">
    <property type="term" value="C:cell surface"/>
    <property type="evidence" value="ECO:0007669"/>
    <property type="project" value="TreeGrafter"/>
</dbReference>
<dbReference type="GO" id="GO:0005615">
    <property type="term" value="C:extracellular space"/>
    <property type="evidence" value="ECO:0007669"/>
    <property type="project" value="UniProtKB-KW"/>
</dbReference>
<dbReference type="GO" id="GO:0005886">
    <property type="term" value="C:plasma membrane"/>
    <property type="evidence" value="ECO:0007669"/>
    <property type="project" value="UniProtKB-SubCell"/>
</dbReference>
<dbReference type="GO" id="GO:0005125">
    <property type="term" value="F:cytokine activity"/>
    <property type="evidence" value="ECO:0007669"/>
    <property type="project" value="UniProtKB-KW"/>
</dbReference>
<dbReference type="GO" id="GO:0005164">
    <property type="term" value="F:tumor necrosis factor receptor binding"/>
    <property type="evidence" value="ECO:0007669"/>
    <property type="project" value="InterPro"/>
</dbReference>
<dbReference type="GO" id="GO:0008625">
    <property type="term" value="P:extrinsic apoptotic signaling pathway via death domain receptors"/>
    <property type="evidence" value="ECO:0007669"/>
    <property type="project" value="TreeGrafter"/>
</dbReference>
<dbReference type="GO" id="GO:0006955">
    <property type="term" value="P:immune response"/>
    <property type="evidence" value="ECO:0007669"/>
    <property type="project" value="InterPro"/>
</dbReference>
<dbReference type="GO" id="GO:0097527">
    <property type="term" value="P:necroptotic signaling pathway"/>
    <property type="evidence" value="ECO:0000250"/>
    <property type="project" value="CAFA"/>
</dbReference>
<dbReference type="GO" id="GO:0043242">
    <property type="term" value="P:negative regulation of protein-containing complex disassembly"/>
    <property type="evidence" value="ECO:0000250"/>
    <property type="project" value="UniProtKB"/>
</dbReference>
<dbReference type="GO" id="GO:0043065">
    <property type="term" value="P:positive regulation of apoptotic process"/>
    <property type="evidence" value="ECO:0000250"/>
    <property type="project" value="UniProtKB"/>
</dbReference>
<dbReference type="GO" id="GO:0043123">
    <property type="term" value="P:positive regulation of canonical NF-kappaB signal transduction"/>
    <property type="evidence" value="ECO:0007669"/>
    <property type="project" value="TreeGrafter"/>
</dbReference>
<dbReference type="GO" id="GO:2001238">
    <property type="term" value="P:positive regulation of extrinsic apoptotic signaling pathway"/>
    <property type="evidence" value="ECO:0007669"/>
    <property type="project" value="TreeGrafter"/>
</dbReference>
<dbReference type="GO" id="GO:0043507">
    <property type="term" value="P:positive regulation of JUN kinase activity"/>
    <property type="evidence" value="ECO:0000250"/>
    <property type="project" value="UniProtKB"/>
</dbReference>
<dbReference type="GO" id="GO:0043406">
    <property type="term" value="P:positive regulation of MAP kinase activity"/>
    <property type="evidence" value="ECO:0000250"/>
    <property type="project" value="UniProtKB"/>
</dbReference>
<dbReference type="GO" id="GO:0051092">
    <property type="term" value="P:positive regulation of NF-kappaB transcription factor activity"/>
    <property type="evidence" value="ECO:0000250"/>
    <property type="project" value="UniProtKB"/>
</dbReference>
<dbReference type="GO" id="GO:0001934">
    <property type="term" value="P:positive regulation of protein phosphorylation"/>
    <property type="evidence" value="ECO:0000250"/>
    <property type="project" value="UniProtKB"/>
</dbReference>
<dbReference type="GO" id="GO:0043243">
    <property type="term" value="P:positive regulation of protein-containing complex disassembly"/>
    <property type="evidence" value="ECO:0000250"/>
    <property type="project" value="UniProtKB"/>
</dbReference>
<dbReference type="GO" id="GO:0045944">
    <property type="term" value="P:positive regulation of transcription by RNA polymerase II"/>
    <property type="evidence" value="ECO:0007669"/>
    <property type="project" value="TreeGrafter"/>
</dbReference>
<dbReference type="GO" id="GO:0065008">
    <property type="term" value="P:regulation of biological quality"/>
    <property type="evidence" value="ECO:0007669"/>
    <property type="project" value="UniProtKB-ARBA"/>
</dbReference>
<dbReference type="GO" id="GO:0050793">
    <property type="term" value="P:regulation of developmental process"/>
    <property type="evidence" value="ECO:0007669"/>
    <property type="project" value="UniProtKB-ARBA"/>
</dbReference>
<dbReference type="GO" id="GO:0051239">
    <property type="term" value="P:regulation of multicellular organismal process"/>
    <property type="evidence" value="ECO:0007669"/>
    <property type="project" value="UniProtKB-ARBA"/>
</dbReference>
<dbReference type="GO" id="GO:0051046">
    <property type="term" value="P:regulation of secretion"/>
    <property type="evidence" value="ECO:0007669"/>
    <property type="project" value="UniProtKB-ARBA"/>
</dbReference>
<dbReference type="GO" id="GO:0033209">
    <property type="term" value="P:tumor necrosis factor-mediated signaling pathway"/>
    <property type="evidence" value="ECO:0007669"/>
    <property type="project" value="TreeGrafter"/>
</dbReference>
<dbReference type="GO" id="GO:0010573">
    <property type="term" value="P:vascular endothelial growth factor production"/>
    <property type="evidence" value="ECO:0000250"/>
    <property type="project" value="UniProtKB"/>
</dbReference>
<dbReference type="CDD" id="cd00184">
    <property type="entry name" value="TNF"/>
    <property type="match status" value="1"/>
</dbReference>
<dbReference type="FunFam" id="2.60.120.40:FF:000007">
    <property type="entry name" value="Tumor necrosis factor"/>
    <property type="match status" value="1"/>
</dbReference>
<dbReference type="Gene3D" id="2.60.120.40">
    <property type="match status" value="1"/>
</dbReference>
<dbReference type="InterPro" id="IPR006053">
    <property type="entry name" value="TNF"/>
</dbReference>
<dbReference type="InterPro" id="IPR002959">
    <property type="entry name" value="TNF_alpha"/>
</dbReference>
<dbReference type="InterPro" id="IPR021184">
    <property type="entry name" value="TNF_CS"/>
</dbReference>
<dbReference type="InterPro" id="IPR006052">
    <property type="entry name" value="TNF_dom"/>
</dbReference>
<dbReference type="InterPro" id="IPR008983">
    <property type="entry name" value="Tumour_necrosis_fac-like_dom"/>
</dbReference>
<dbReference type="PANTHER" id="PTHR11471:SF23">
    <property type="entry name" value="TUMOR NECROSIS FACTOR"/>
    <property type="match status" value="1"/>
</dbReference>
<dbReference type="PANTHER" id="PTHR11471">
    <property type="entry name" value="TUMOR NECROSIS FACTOR FAMILY MEMBER"/>
    <property type="match status" value="1"/>
</dbReference>
<dbReference type="Pfam" id="PF00229">
    <property type="entry name" value="TNF"/>
    <property type="match status" value="1"/>
</dbReference>
<dbReference type="PRINTS" id="PR01234">
    <property type="entry name" value="TNECROSISFCT"/>
</dbReference>
<dbReference type="PRINTS" id="PR01235">
    <property type="entry name" value="TNFALPHA"/>
</dbReference>
<dbReference type="SMART" id="SM00207">
    <property type="entry name" value="TNF"/>
    <property type="match status" value="1"/>
</dbReference>
<dbReference type="SUPFAM" id="SSF49842">
    <property type="entry name" value="TNF-like"/>
    <property type="match status" value="1"/>
</dbReference>
<dbReference type="PROSITE" id="PS00251">
    <property type="entry name" value="THD_1"/>
    <property type="match status" value="1"/>
</dbReference>
<dbReference type="PROSITE" id="PS50049">
    <property type="entry name" value="THD_2"/>
    <property type="match status" value="1"/>
</dbReference>
<sequence length="232" mass="25433">MSTETMIQDVELAEEALPKTRGPQGSKRRLFLSLFSFLLVAGATALFCLLHFGVIGPQKDELSKDFSLISPLALAVRSSSRIPSDKPVAHVVANPQAEGQLQWLNRRANALLANGVELRDNQLVVPSEGLYLVYSQVLFKGQGCPSNFMLLTHSISRIAVSYQAKVNLLSAIKSPCQRETPQGAKTNPWYEPIYLGGVFQLEKGDRLSAEINLPDYLDLAESGQVYFGIIGL</sequence>
<gene>
    <name type="primary">TNF</name>
    <name type="synonym">TNFA</name>
    <name type="synonym">TNFSF2</name>
</gene>
<name>TNFA_CALJA</name>